<organism>
    <name type="scientific">Ligilactobacillus salivarius (strain UCC118)</name>
    <name type="common">Lactobacillus salivarius</name>
    <dbReference type="NCBI Taxonomy" id="362948"/>
    <lineage>
        <taxon>Bacteria</taxon>
        <taxon>Bacillati</taxon>
        <taxon>Bacillota</taxon>
        <taxon>Bacilli</taxon>
        <taxon>Lactobacillales</taxon>
        <taxon>Lactobacillaceae</taxon>
        <taxon>Ligilactobacillus</taxon>
    </lineage>
</organism>
<keyword id="KW-0067">ATP-binding</keyword>
<keyword id="KW-1003">Cell membrane</keyword>
<keyword id="KW-0472">Membrane</keyword>
<keyword id="KW-0547">Nucleotide-binding</keyword>
<keyword id="KW-0592">Phosphate transport</keyword>
<keyword id="KW-1185">Reference proteome</keyword>
<keyword id="KW-1278">Translocase</keyword>
<keyword id="KW-0813">Transport</keyword>
<comment type="function">
    <text evidence="1">Part of the ABC transporter complex PstSACB involved in phosphate import. Responsible for energy coupling to the transport system.</text>
</comment>
<comment type="catalytic activity">
    <reaction evidence="1">
        <text>phosphate(out) + ATP + H2O = ADP + 2 phosphate(in) + H(+)</text>
        <dbReference type="Rhea" id="RHEA:24440"/>
        <dbReference type="ChEBI" id="CHEBI:15377"/>
        <dbReference type="ChEBI" id="CHEBI:15378"/>
        <dbReference type="ChEBI" id="CHEBI:30616"/>
        <dbReference type="ChEBI" id="CHEBI:43474"/>
        <dbReference type="ChEBI" id="CHEBI:456216"/>
        <dbReference type="EC" id="7.3.2.1"/>
    </reaction>
</comment>
<comment type="subunit">
    <text evidence="1">The complex is composed of two ATP-binding proteins (PstB), two transmembrane proteins (PstC and PstA) and a solute-binding protein (PstS).</text>
</comment>
<comment type="subcellular location">
    <subcellularLocation>
        <location evidence="1">Cell membrane</location>
        <topology evidence="1">Peripheral membrane protein</topology>
    </subcellularLocation>
</comment>
<comment type="similarity">
    <text evidence="1">Belongs to the ABC transporter superfamily. Phosphate importer (TC 3.A.1.7) family.</text>
</comment>
<accession>Q1WUX1</accession>
<sequence>MEKIITTKDVHLYYGSKEALKGITLDFPDKGIHALIGPSGCGKSTYLRTLNRMNDMIENVKIEGEFKFKNQNIYDEKIDLVELRKKIGMVFQQPNPFPFSIYDNVTYGLRMAGIKDKRILDEKVETSLKQAAIWEEVKDNLNKNALALSGGQQQRICIARVLAVAPEVILLDEPTSALDPISTEKIEEMLLTLRDNYTCIMVTHNMQQASRISDTTSFFLSGNLVESNKTKKIFLNPDKEQTADYLSGKFG</sequence>
<feature type="chain" id="PRO_0000272471" description="Phosphate import ATP-binding protein PstB 2">
    <location>
        <begin position="1"/>
        <end position="251"/>
    </location>
</feature>
<feature type="domain" description="ABC transporter" evidence="1">
    <location>
        <begin position="5"/>
        <end position="246"/>
    </location>
</feature>
<feature type="binding site" evidence="1">
    <location>
        <begin position="37"/>
        <end position="44"/>
    </location>
    <ligand>
        <name>ATP</name>
        <dbReference type="ChEBI" id="CHEBI:30616"/>
    </ligand>
</feature>
<dbReference type="EC" id="7.3.2.1" evidence="1"/>
<dbReference type="EMBL" id="CP000233">
    <property type="protein sequence ID" value="ABD99214.1"/>
    <property type="molecule type" value="Genomic_DNA"/>
</dbReference>
<dbReference type="RefSeq" id="YP_535297.1">
    <property type="nucleotide sequence ID" value="NC_007929.1"/>
</dbReference>
<dbReference type="SMR" id="Q1WUX1"/>
<dbReference type="STRING" id="362948.LSL_0404"/>
<dbReference type="KEGG" id="lsl:LSL_0404"/>
<dbReference type="PATRIC" id="fig|362948.14.peg.483"/>
<dbReference type="HOGENOM" id="CLU_000604_1_22_9"/>
<dbReference type="OrthoDB" id="9802185at2"/>
<dbReference type="Proteomes" id="UP000006559">
    <property type="component" value="Chromosome"/>
</dbReference>
<dbReference type="GO" id="GO:0005886">
    <property type="term" value="C:plasma membrane"/>
    <property type="evidence" value="ECO:0007669"/>
    <property type="project" value="UniProtKB-SubCell"/>
</dbReference>
<dbReference type="GO" id="GO:0005524">
    <property type="term" value="F:ATP binding"/>
    <property type="evidence" value="ECO:0007669"/>
    <property type="project" value="UniProtKB-KW"/>
</dbReference>
<dbReference type="GO" id="GO:0016887">
    <property type="term" value="F:ATP hydrolysis activity"/>
    <property type="evidence" value="ECO:0007669"/>
    <property type="project" value="InterPro"/>
</dbReference>
<dbReference type="GO" id="GO:0015415">
    <property type="term" value="F:ATPase-coupled phosphate ion transmembrane transporter activity"/>
    <property type="evidence" value="ECO:0007669"/>
    <property type="project" value="UniProtKB-EC"/>
</dbReference>
<dbReference type="GO" id="GO:0035435">
    <property type="term" value="P:phosphate ion transmembrane transport"/>
    <property type="evidence" value="ECO:0007669"/>
    <property type="project" value="InterPro"/>
</dbReference>
<dbReference type="CDD" id="cd03260">
    <property type="entry name" value="ABC_PstB_phosphate_transporter"/>
    <property type="match status" value="1"/>
</dbReference>
<dbReference type="Gene3D" id="3.40.50.300">
    <property type="entry name" value="P-loop containing nucleotide triphosphate hydrolases"/>
    <property type="match status" value="1"/>
</dbReference>
<dbReference type="InterPro" id="IPR003593">
    <property type="entry name" value="AAA+_ATPase"/>
</dbReference>
<dbReference type="InterPro" id="IPR003439">
    <property type="entry name" value="ABC_transporter-like_ATP-bd"/>
</dbReference>
<dbReference type="InterPro" id="IPR017871">
    <property type="entry name" value="ABC_transporter-like_CS"/>
</dbReference>
<dbReference type="InterPro" id="IPR027417">
    <property type="entry name" value="P-loop_NTPase"/>
</dbReference>
<dbReference type="InterPro" id="IPR005670">
    <property type="entry name" value="PstB-like"/>
</dbReference>
<dbReference type="NCBIfam" id="TIGR00972">
    <property type="entry name" value="3a0107s01c2"/>
    <property type="match status" value="1"/>
</dbReference>
<dbReference type="PANTHER" id="PTHR43423">
    <property type="entry name" value="ABC TRANSPORTER I FAMILY MEMBER 17"/>
    <property type="match status" value="1"/>
</dbReference>
<dbReference type="PANTHER" id="PTHR43423:SF1">
    <property type="entry name" value="ABC TRANSPORTER I FAMILY MEMBER 17"/>
    <property type="match status" value="1"/>
</dbReference>
<dbReference type="Pfam" id="PF00005">
    <property type="entry name" value="ABC_tran"/>
    <property type="match status" value="1"/>
</dbReference>
<dbReference type="SMART" id="SM00382">
    <property type="entry name" value="AAA"/>
    <property type="match status" value="1"/>
</dbReference>
<dbReference type="SUPFAM" id="SSF52540">
    <property type="entry name" value="P-loop containing nucleoside triphosphate hydrolases"/>
    <property type="match status" value="1"/>
</dbReference>
<dbReference type="PROSITE" id="PS00211">
    <property type="entry name" value="ABC_TRANSPORTER_1"/>
    <property type="match status" value="1"/>
</dbReference>
<dbReference type="PROSITE" id="PS50893">
    <property type="entry name" value="ABC_TRANSPORTER_2"/>
    <property type="match status" value="1"/>
</dbReference>
<dbReference type="PROSITE" id="PS51238">
    <property type="entry name" value="PSTB"/>
    <property type="match status" value="1"/>
</dbReference>
<protein>
    <recommendedName>
        <fullName evidence="1">Phosphate import ATP-binding protein PstB 2</fullName>
        <ecNumber evidence="1">7.3.2.1</ecNumber>
    </recommendedName>
    <alternativeName>
        <fullName evidence="1">ABC phosphate transporter 2</fullName>
    </alternativeName>
    <alternativeName>
        <fullName evidence="1">Phosphate-transporting ATPase 2</fullName>
    </alternativeName>
</protein>
<reference key="1">
    <citation type="journal article" date="2006" name="Proc. Natl. Acad. Sci. U.S.A.">
        <title>Multireplicon genome architecture of Lactobacillus salivarius.</title>
        <authorList>
            <person name="Claesson M.J."/>
            <person name="Li Y."/>
            <person name="Leahy S."/>
            <person name="Canchaya C."/>
            <person name="van Pijkeren J.P."/>
            <person name="Cerdeno-Tarraga A.M."/>
            <person name="Parkhill J."/>
            <person name="Flynn S."/>
            <person name="O'Sullivan G.C."/>
            <person name="Collins J.K."/>
            <person name="Higgins D."/>
            <person name="Shanahan F."/>
            <person name="Fitzgerald G.F."/>
            <person name="van Sinderen D."/>
            <person name="O'Toole P.W."/>
        </authorList>
    </citation>
    <scope>NUCLEOTIDE SEQUENCE [LARGE SCALE GENOMIC DNA]</scope>
    <source>
        <strain>UCC118</strain>
    </source>
</reference>
<name>PSTB2_LIGS1</name>
<proteinExistence type="inferred from homology"/>
<evidence type="ECO:0000255" key="1">
    <source>
        <dbReference type="HAMAP-Rule" id="MF_01702"/>
    </source>
</evidence>
<gene>
    <name evidence="1" type="primary">pstB2</name>
    <name type="ordered locus">LSL_0404</name>
</gene>